<reference key="1">
    <citation type="journal article" date="2004" name="Nucleic Acids Res.">
        <title>Genome sequence of Symbiobacterium thermophilum, an uncultivable bacterium that depends on microbial commensalism.</title>
        <authorList>
            <person name="Ueda K."/>
            <person name="Yamashita A."/>
            <person name="Ishikawa J."/>
            <person name="Shimada M."/>
            <person name="Watsuji T."/>
            <person name="Morimura K."/>
            <person name="Ikeda H."/>
            <person name="Hattori M."/>
            <person name="Beppu T."/>
        </authorList>
    </citation>
    <scope>NUCLEOTIDE SEQUENCE [LARGE SCALE GENOMIC DNA]</scope>
    <source>
        <strain>DSM 24528 / JCM 14929 / IAM 14863 / T</strain>
    </source>
</reference>
<keyword id="KW-0240">DNA-directed RNA polymerase</keyword>
<keyword id="KW-0548">Nucleotidyltransferase</keyword>
<keyword id="KW-1185">Reference proteome</keyword>
<keyword id="KW-0804">Transcription</keyword>
<keyword id="KW-0808">Transferase</keyword>
<dbReference type="EC" id="2.7.7.6" evidence="1"/>
<dbReference type="EMBL" id="AP006840">
    <property type="protein sequence ID" value="BAD42029.1"/>
    <property type="molecule type" value="Genomic_DNA"/>
</dbReference>
<dbReference type="RefSeq" id="WP_011197162.1">
    <property type="nucleotide sequence ID" value="NC_006177.1"/>
</dbReference>
<dbReference type="SMR" id="Q67JX1"/>
<dbReference type="STRING" id="292459.STH3047"/>
<dbReference type="KEGG" id="sth:STH3047"/>
<dbReference type="eggNOG" id="COG0202">
    <property type="taxonomic scope" value="Bacteria"/>
</dbReference>
<dbReference type="HOGENOM" id="CLU_053084_0_1_9"/>
<dbReference type="OrthoDB" id="9805706at2"/>
<dbReference type="Proteomes" id="UP000000417">
    <property type="component" value="Chromosome"/>
</dbReference>
<dbReference type="GO" id="GO:0005737">
    <property type="term" value="C:cytoplasm"/>
    <property type="evidence" value="ECO:0007669"/>
    <property type="project" value="UniProtKB-ARBA"/>
</dbReference>
<dbReference type="GO" id="GO:0000428">
    <property type="term" value="C:DNA-directed RNA polymerase complex"/>
    <property type="evidence" value="ECO:0007669"/>
    <property type="project" value="UniProtKB-KW"/>
</dbReference>
<dbReference type="GO" id="GO:0003677">
    <property type="term" value="F:DNA binding"/>
    <property type="evidence" value="ECO:0007669"/>
    <property type="project" value="UniProtKB-UniRule"/>
</dbReference>
<dbReference type="GO" id="GO:0003899">
    <property type="term" value="F:DNA-directed RNA polymerase activity"/>
    <property type="evidence" value="ECO:0007669"/>
    <property type="project" value="UniProtKB-UniRule"/>
</dbReference>
<dbReference type="GO" id="GO:0046983">
    <property type="term" value="F:protein dimerization activity"/>
    <property type="evidence" value="ECO:0007669"/>
    <property type="project" value="InterPro"/>
</dbReference>
<dbReference type="GO" id="GO:0006351">
    <property type="term" value="P:DNA-templated transcription"/>
    <property type="evidence" value="ECO:0007669"/>
    <property type="project" value="UniProtKB-UniRule"/>
</dbReference>
<dbReference type="CDD" id="cd06928">
    <property type="entry name" value="RNAP_alpha_NTD"/>
    <property type="match status" value="1"/>
</dbReference>
<dbReference type="FunFam" id="1.10.150.20:FF:000001">
    <property type="entry name" value="DNA-directed RNA polymerase subunit alpha"/>
    <property type="match status" value="1"/>
</dbReference>
<dbReference type="FunFam" id="2.170.120.12:FF:000001">
    <property type="entry name" value="DNA-directed RNA polymerase subunit alpha"/>
    <property type="match status" value="1"/>
</dbReference>
<dbReference type="Gene3D" id="1.10.150.20">
    <property type="entry name" value="5' to 3' exonuclease, C-terminal subdomain"/>
    <property type="match status" value="1"/>
</dbReference>
<dbReference type="Gene3D" id="2.170.120.12">
    <property type="entry name" value="DNA-directed RNA polymerase, insert domain"/>
    <property type="match status" value="1"/>
</dbReference>
<dbReference type="Gene3D" id="3.30.1360.10">
    <property type="entry name" value="RNA polymerase, RBP11-like subunit"/>
    <property type="match status" value="1"/>
</dbReference>
<dbReference type="HAMAP" id="MF_00059">
    <property type="entry name" value="RNApol_bact_RpoA"/>
    <property type="match status" value="1"/>
</dbReference>
<dbReference type="InterPro" id="IPR011262">
    <property type="entry name" value="DNA-dir_RNA_pol_insert"/>
</dbReference>
<dbReference type="InterPro" id="IPR011263">
    <property type="entry name" value="DNA-dir_RNA_pol_RpoA/D/Rpb3"/>
</dbReference>
<dbReference type="InterPro" id="IPR011773">
    <property type="entry name" value="DNA-dir_RpoA"/>
</dbReference>
<dbReference type="InterPro" id="IPR036603">
    <property type="entry name" value="RBP11-like"/>
</dbReference>
<dbReference type="InterPro" id="IPR011260">
    <property type="entry name" value="RNAP_asu_C"/>
</dbReference>
<dbReference type="InterPro" id="IPR036643">
    <property type="entry name" value="RNApol_insert_sf"/>
</dbReference>
<dbReference type="NCBIfam" id="NF003513">
    <property type="entry name" value="PRK05182.1-2"/>
    <property type="match status" value="1"/>
</dbReference>
<dbReference type="NCBIfam" id="NF003515">
    <property type="entry name" value="PRK05182.2-1"/>
    <property type="match status" value="1"/>
</dbReference>
<dbReference type="NCBIfam" id="NF003516">
    <property type="entry name" value="PRK05182.2-2"/>
    <property type="match status" value="1"/>
</dbReference>
<dbReference type="NCBIfam" id="NF003519">
    <property type="entry name" value="PRK05182.2-5"/>
    <property type="match status" value="1"/>
</dbReference>
<dbReference type="NCBIfam" id="TIGR02027">
    <property type="entry name" value="rpoA"/>
    <property type="match status" value="1"/>
</dbReference>
<dbReference type="Pfam" id="PF01000">
    <property type="entry name" value="RNA_pol_A_bac"/>
    <property type="match status" value="1"/>
</dbReference>
<dbReference type="Pfam" id="PF03118">
    <property type="entry name" value="RNA_pol_A_CTD"/>
    <property type="match status" value="1"/>
</dbReference>
<dbReference type="Pfam" id="PF01193">
    <property type="entry name" value="RNA_pol_L"/>
    <property type="match status" value="1"/>
</dbReference>
<dbReference type="SMART" id="SM00662">
    <property type="entry name" value="RPOLD"/>
    <property type="match status" value="1"/>
</dbReference>
<dbReference type="SUPFAM" id="SSF47789">
    <property type="entry name" value="C-terminal domain of RNA polymerase alpha subunit"/>
    <property type="match status" value="1"/>
</dbReference>
<dbReference type="SUPFAM" id="SSF56553">
    <property type="entry name" value="Insert subdomain of RNA polymerase alpha subunit"/>
    <property type="match status" value="1"/>
</dbReference>
<dbReference type="SUPFAM" id="SSF55257">
    <property type="entry name" value="RBP11-like subunits of RNA polymerase"/>
    <property type="match status" value="1"/>
</dbReference>
<sequence length="315" mass="35030">MIGMEKPKIETVVLAEDNSYGKFVVEPLERGYGITLGNSLRRILLSSLPGAAVTSVKIDGVLHEFSTLPGVVEDVTDIILNLKQLSLRMHSDEPKVLRLHAEGEGEVTAGDIHTDADVEILNPDLHIATLDKGGRLIAEITVSKGRGYVPADQNKTPDMPIGVIPVDSIFSPIRRVNYTIEHTRVGNKTNYDKLTLEVWTNGAIRPDEACSWAAKILKEHLELFISLTEDADEIEVMQEKEDDERNKLMEMTIEELDLSVRSYNCLKRAGINTIAELVSKTDEEMMKVRNLGKKSLEEVKTKLAAFGLSLRQPDD</sequence>
<proteinExistence type="inferred from homology"/>
<evidence type="ECO:0000255" key="1">
    <source>
        <dbReference type="HAMAP-Rule" id="MF_00059"/>
    </source>
</evidence>
<accession>Q67JX1</accession>
<feature type="chain" id="PRO_0000175400" description="DNA-directed RNA polymerase subunit alpha">
    <location>
        <begin position="1"/>
        <end position="315"/>
    </location>
</feature>
<feature type="region of interest" description="Alpha N-terminal domain (alpha-NTD)" evidence="1">
    <location>
        <begin position="1"/>
        <end position="228"/>
    </location>
</feature>
<feature type="region of interest" description="Alpha C-terminal domain (alpha-CTD)" evidence="1">
    <location>
        <begin position="245"/>
        <end position="315"/>
    </location>
</feature>
<gene>
    <name evidence="1" type="primary">rpoA</name>
    <name type="ordered locus">STH3047</name>
</gene>
<name>RPOA_SYMTH</name>
<comment type="function">
    <text evidence="1">DNA-dependent RNA polymerase catalyzes the transcription of DNA into RNA using the four ribonucleoside triphosphates as substrates.</text>
</comment>
<comment type="catalytic activity">
    <reaction evidence="1">
        <text>RNA(n) + a ribonucleoside 5'-triphosphate = RNA(n+1) + diphosphate</text>
        <dbReference type="Rhea" id="RHEA:21248"/>
        <dbReference type="Rhea" id="RHEA-COMP:14527"/>
        <dbReference type="Rhea" id="RHEA-COMP:17342"/>
        <dbReference type="ChEBI" id="CHEBI:33019"/>
        <dbReference type="ChEBI" id="CHEBI:61557"/>
        <dbReference type="ChEBI" id="CHEBI:140395"/>
        <dbReference type="EC" id="2.7.7.6"/>
    </reaction>
</comment>
<comment type="subunit">
    <text evidence="1">Homodimer. The RNAP catalytic core consists of 2 alpha, 1 beta, 1 beta' and 1 omega subunit. When a sigma factor is associated with the core the holoenzyme is formed, which can initiate transcription.</text>
</comment>
<comment type="domain">
    <text evidence="1">The N-terminal domain is essential for RNAP assembly and basal transcription, whereas the C-terminal domain is involved in interaction with transcriptional regulators and with upstream promoter elements.</text>
</comment>
<comment type="similarity">
    <text evidence="1">Belongs to the RNA polymerase alpha chain family.</text>
</comment>
<organism>
    <name type="scientific">Symbiobacterium thermophilum (strain DSM 24528 / JCM 14929 / IAM 14863 / T)</name>
    <dbReference type="NCBI Taxonomy" id="292459"/>
    <lineage>
        <taxon>Bacteria</taxon>
        <taxon>Bacillati</taxon>
        <taxon>Bacillota</taxon>
        <taxon>Clostridia</taxon>
        <taxon>Eubacteriales</taxon>
        <taxon>Symbiobacteriaceae</taxon>
        <taxon>Symbiobacterium</taxon>
    </lineage>
</organism>
<protein>
    <recommendedName>
        <fullName evidence="1">DNA-directed RNA polymerase subunit alpha</fullName>
        <shortName evidence="1">RNAP subunit alpha</shortName>
        <ecNumber evidence="1">2.7.7.6</ecNumber>
    </recommendedName>
    <alternativeName>
        <fullName evidence="1">RNA polymerase subunit alpha</fullName>
    </alternativeName>
    <alternativeName>
        <fullName evidence="1">Transcriptase subunit alpha</fullName>
    </alternativeName>
</protein>